<name>MGSA_SALTY</name>
<keyword id="KW-0456">Lyase</keyword>
<keyword id="KW-1185">Reference proteome</keyword>
<feature type="chain" id="PRO_0000178645" description="Methylglyoxal synthase">
    <location>
        <begin position="1"/>
        <end position="152"/>
    </location>
</feature>
<feature type="domain" description="MGS-like" evidence="1">
    <location>
        <begin position="6"/>
        <end position="152"/>
    </location>
</feature>
<feature type="active site" description="Proton donor/acceptor" evidence="1">
    <location>
        <position position="71"/>
    </location>
</feature>
<feature type="binding site" evidence="1">
    <location>
        <position position="19"/>
    </location>
    <ligand>
        <name>substrate</name>
    </ligand>
</feature>
<feature type="binding site" evidence="1">
    <location>
        <position position="23"/>
    </location>
    <ligand>
        <name>substrate</name>
    </ligand>
</feature>
<feature type="binding site" evidence="1">
    <location>
        <begin position="45"/>
        <end position="48"/>
    </location>
    <ligand>
        <name>substrate</name>
    </ligand>
</feature>
<feature type="binding site" evidence="1">
    <location>
        <begin position="65"/>
        <end position="66"/>
    </location>
    <ligand>
        <name>substrate</name>
    </ligand>
</feature>
<feature type="binding site" evidence="1">
    <location>
        <position position="98"/>
    </location>
    <ligand>
        <name>substrate</name>
    </ligand>
</feature>
<sequence length="152" mass="16991">MELTTRTLPTRKHIALVAHDHCKQMLMNWVERHQPLLEKHVLYATGTTGNLIQRATGMDVNAMLSGPMGGDQQVGALISEGKIDVLIFFWDPLNAVPHDPDVKALLRLATVWNIPVATNVSTADFIIQSPHFNDAVDILIPDYARYLAERLK</sequence>
<evidence type="ECO:0000255" key="1">
    <source>
        <dbReference type="HAMAP-Rule" id="MF_00549"/>
    </source>
</evidence>
<dbReference type="EC" id="4.2.3.3" evidence="1"/>
<dbReference type="EMBL" id="AE006468">
    <property type="protein sequence ID" value="AAL20009.1"/>
    <property type="molecule type" value="Genomic_DNA"/>
</dbReference>
<dbReference type="RefSeq" id="NP_460050.1">
    <property type="nucleotide sequence ID" value="NC_003197.2"/>
</dbReference>
<dbReference type="RefSeq" id="WP_000424187.1">
    <property type="nucleotide sequence ID" value="NC_003197.2"/>
</dbReference>
<dbReference type="SMR" id="P65350"/>
<dbReference type="STRING" id="99287.STM1076"/>
<dbReference type="PaxDb" id="99287-STM1076"/>
<dbReference type="GeneID" id="1252594"/>
<dbReference type="KEGG" id="stm:STM1076"/>
<dbReference type="PATRIC" id="fig|99287.12.peg.1141"/>
<dbReference type="HOGENOM" id="CLU_120420_0_1_6"/>
<dbReference type="OMA" id="RICDVHN"/>
<dbReference type="PhylomeDB" id="P65350"/>
<dbReference type="BioCyc" id="SENT99287:STM1076-MONOMER"/>
<dbReference type="Proteomes" id="UP000001014">
    <property type="component" value="Chromosome"/>
</dbReference>
<dbReference type="GO" id="GO:0005829">
    <property type="term" value="C:cytosol"/>
    <property type="evidence" value="ECO:0000318"/>
    <property type="project" value="GO_Central"/>
</dbReference>
<dbReference type="GO" id="GO:0008929">
    <property type="term" value="F:methylglyoxal synthase activity"/>
    <property type="evidence" value="ECO:0000318"/>
    <property type="project" value="GO_Central"/>
</dbReference>
<dbReference type="GO" id="GO:0019242">
    <property type="term" value="P:methylglyoxal biosynthetic process"/>
    <property type="evidence" value="ECO:0000318"/>
    <property type="project" value="GO_Central"/>
</dbReference>
<dbReference type="CDD" id="cd01422">
    <property type="entry name" value="MGS"/>
    <property type="match status" value="1"/>
</dbReference>
<dbReference type="FunFam" id="3.40.50.1380:FF:000002">
    <property type="entry name" value="Methylglyoxal synthase"/>
    <property type="match status" value="1"/>
</dbReference>
<dbReference type="Gene3D" id="3.40.50.1380">
    <property type="entry name" value="Methylglyoxal synthase-like domain"/>
    <property type="match status" value="1"/>
</dbReference>
<dbReference type="HAMAP" id="MF_00549">
    <property type="entry name" value="Methylglyoxal_synth"/>
    <property type="match status" value="1"/>
</dbReference>
<dbReference type="InterPro" id="IPR004363">
    <property type="entry name" value="Methylgl_synth"/>
</dbReference>
<dbReference type="InterPro" id="IPR018148">
    <property type="entry name" value="Methylglyoxal_synth_AS"/>
</dbReference>
<dbReference type="InterPro" id="IPR011607">
    <property type="entry name" value="MGS-like_dom"/>
</dbReference>
<dbReference type="InterPro" id="IPR036914">
    <property type="entry name" value="MGS-like_dom_sf"/>
</dbReference>
<dbReference type="NCBIfam" id="TIGR00160">
    <property type="entry name" value="MGSA"/>
    <property type="match status" value="1"/>
</dbReference>
<dbReference type="NCBIfam" id="NF003559">
    <property type="entry name" value="PRK05234.1"/>
    <property type="match status" value="1"/>
</dbReference>
<dbReference type="PANTHER" id="PTHR30492">
    <property type="entry name" value="METHYLGLYOXAL SYNTHASE"/>
    <property type="match status" value="1"/>
</dbReference>
<dbReference type="PANTHER" id="PTHR30492:SF0">
    <property type="entry name" value="METHYLGLYOXAL SYNTHASE"/>
    <property type="match status" value="1"/>
</dbReference>
<dbReference type="Pfam" id="PF02142">
    <property type="entry name" value="MGS"/>
    <property type="match status" value="1"/>
</dbReference>
<dbReference type="PIRSF" id="PIRSF006614">
    <property type="entry name" value="Methylglyox_syn"/>
    <property type="match status" value="1"/>
</dbReference>
<dbReference type="SMART" id="SM00851">
    <property type="entry name" value="MGS"/>
    <property type="match status" value="1"/>
</dbReference>
<dbReference type="SUPFAM" id="SSF52335">
    <property type="entry name" value="Methylglyoxal synthase-like"/>
    <property type="match status" value="1"/>
</dbReference>
<dbReference type="PROSITE" id="PS01335">
    <property type="entry name" value="METHYLGLYOXAL_SYNTH"/>
    <property type="match status" value="1"/>
</dbReference>
<dbReference type="PROSITE" id="PS51855">
    <property type="entry name" value="MGS"/>
    <property type="match status" value="1"/>
</dbReference>
<comment type="function">
    <text evidence="1">Catalyzes the formation of methylglyoxal from dihydroxyacetone phosphate.</text>
</comment>
<comment type="catalytic activity">
    <reaction evidence="1">
        <text>dihydroxyacetone phosphate = methylglyoxal + phosphate</text>
        <dbReference type="Rhea" id="RHEA:17937"/>
        <dbReference type="ChEBI" id="CHEBI:17158"/>
        <dbReference type="ChEBI" id="CHEBI:43474"/>
        <dbReference type="ChEBI" id="CHEBI:57642"/>
        <dbReference type="EC" id="4.2.3.3"/>
    </reaction>
</comment>
<comment type="similarity">
    <text evidence="1">Belongs to the methylglyoxal synthase family.</text>
</comment>
<gene>
    <name evidence="1" type="primary">mgsA</name>
    <name type="ordered locus">STM1076</name>
</gene>
<reference key="1">
    <citation type="journal article" date="2001" name="Nature">
        <title>Complete genome sequence of Salmonella enterica serovar Typhimurium LT2.</title>
        <authorList>
            <person name="McClelland M."/>
            <person name="Sanderson K.E."/>
            <person name="Spieth J."/>
            <person name="Clifton S.W."/>
            <person name="Latreille P."/>
            <person name="Courtney L."/>
            <person name="Porwollik S."/>
            <person name="Ali J."/>
            <person name="Dante M."/>
            <person name="Du F."/>
            <person name="Hou S."/>
            <person name="Layman D."/>
            <person name="Leonard S."/>
            <person name="Nguyen C."/>
            <person name="Scott K."/>
            <person name="Holmes A."/>
            <person name="Grewal N."/>
            <person name="Mulvaney E."/>
            <person name="Ryan E."/>
            <person name="Sun H."/>
            <person name="Florea L."/>
            <person name="Miller W."/>
            <person name="Stoneking T."/>
            <person name="Nhan M."/>
            <person name="Waterston R."/>
            <person name="Wilson R.K."/>
        </authorList>
    </citation>
    <scope>NUCLEOTIDE SEQUENCE [LARGE SCALE GENOMIC DNA]</scope>
    <source>
        <strain>LT2 / SGSC1412 / ATCC 700720</strain>
    </source>
</reference>
<organism>
    <name type="scientific">Salmonella typhimurium (strain LT2 / SGSC1412 / ATCC 700720)</name>
    <dbReference type="NCBI Taxonomy" id="99287"/>
    <lineage>
        <taxon>Bacteria</taxon>
        <taxon>Pseudomonadati</taxon>
        <taxon>Pseudomonadota</taxon>
        <taxon>Gammaproteobacteria</taxon>
        <taxon>Enterobacterales</taxon>
        <taxon>Enterobacteriaceae</taxon>
        <taxon>Salmonella</taxon>
    </lineage>
</organism>
<accession>P65350</accession>
<accession>Q8XER5</accession>
<protein>
    <recommendedName>
        <fullName evidence="1">Methylglyoxal synthase</fullName>
        <shortName evidence="1">MGS</shortName>
        <ecNumber evidence="1">4.2.3.3</ecNumber>
    </recommendedName>
</protein>
<proteinExistence type="inferred from homology"/>